<gene>
    <name type="primary">tun</name>
    <name type="ORF">GA20933</name>
</gene>
<organism>
    <name type="scientific">Drosophila pseudoobscura pseudoobscura</name>
    <name type="common">Fruit fly</name>
    <dbReference type="NCBI Taxonomy" id="46245"/>
    <lineage>
        <taxon>Eukaryota</taxon>
        <taxon>Metazoa</taxon>
        <taxon>Ecdysozoa</taxon>
        <taxon>Arthropoda</taxon>
        <taxon>Hexapoda</taxon>
        <taxon>Insecta</taxon>
        <taxon>Pterygota</taxon>
        <taxon>Neoptera</taxon>
        <taxon>Endopterygota</taxon>
        <taxon>Diptera</taxon>
        <taxon>Brachycera</taxon>
        <taxon>Muscomorpha</taxon>
        <taxon>Ephydroidea</taxon>
        <taxon>Drosophilidae</taxon>
        <taxon>Drosophila</taxon>
        <taxon>Sophophora</taxon>
    </lineage>
</organism>
<proteinExistence type="inferred from homology"/>
<comment type="function">
    <text evidence="2">Mediates the side-chain deamidation of N-terminal glutamine residues to glutamate, an important step in N-end rule pathway of protein degradation. Conversion of the resulting N-terminal glutamine to glutamate renders the protein susceptible to arginylation, polyubiquitination and degradation as specified by the N-end rule. Does not act on substrates with internal or C-terminal glutamine and does not act on non-glutamine residues in any position.</text>
</comment>
<comment type="catalytic activity">
    <reaction evidence="2">
        <text>N-terminal L-glutaminyl-[protein] + H2O = N-terminal L-glutamyl-[protein] + NH4(+)</text>
        <dbReference type="Rhea" id="RHEA:50680"/>
        <dbReference type="Rhea" id="RHEA-COMP:12668"/>
        <dbReference type="Rhea" id="RHEA-COMP:12777"/>
        <dbReference type="ChEBI" id="CHEBI:15377"/>
        <dbReference type="ChEBI" id="CHEBI:28938"/>
        <dbReference type="ChEBI" id="CHEBI:64721"/>
        <dbReference type="ChEBI" id="CHEBI:64722"/>
        <dbReference type="EC" id="3.5.1.122"/>
    </reaction>
</comment>
<comment type="subunit">
    <text evidence="3">Monomer.</text>
</comment>
<comment type="similarity">
    <text evidence="4">Belongs to the NTAQ1 family.</text>
</comment>
<accession>Q28WL0</accession>
<feature type="chain" id="PRO_0000381828" description="Protein N-terminal glutamine amidohydrolase">
    <location>
        <begin position="1"/>
        <end position="205"/>
    </location>
</feature>
<feature type="active site" evidence="1">
    <location>
        <position position="20"/>
    </location>
</feature>
<feature type="active site" evidence="1">
    <location>
        <position position="74"/>
    </location>
</feature>
<feature type="active site" evidence="1">
    <location>
        <position position="90"/>
    </location>
</feature>
<protein>
    <recommendedName>
        <fullName>Protein N-terminal glutamine amidohydrolase</fullName>
        <ecNumber evidence="2">3.5.1.122</ecNumber>
    </recommendedName>
    <alternativeName>
        <fullName>Protein NH2-terminal glutamine deamidase</fullName>
        <shortName>N-terminal Gln amidase</shortName>
        <shortName>Nt(Q)-amidase</shortName>
    </alternativeName>
    <alternativeName>
        <fullName>Protein tungus</fullName>
    </alternativeName>
</protein>
<name>NTAQ1_DROPS</name>
<keyword id="KW-0378">Hydrolase</keyword>
<keyword id="KW-1185">Reference proteome</keyword>
<reference key="1">
    <citation type="journal article" date="2005" name="Genome Res.">
        <title>Comparative genome sequencing of Drosophila pseudoobscura: chromosomal, gene, and cis-element evolution.</title>
        <authorList>
            <person name="Richards S."/>
            <person name="Liu Y."/>
            <person name="Bettencourt B.R."/>
            <person name="Hradecky P."/>
            <person name="Letovsky S."/>
            <person name="Nielsen R."/>
            <person name="Thornton K."/>
            <person name="Hubisz M.J."/>
            <person name="Chen R."/>
            <person name="Meisel R.P."/>
            <person name="Couronne O."/>
            <person name="Hua S."/>
            <person name="Smith M.A."/>
            <person name="Zhang P."/>
            <person name="Liu J."/>
            <person name="Bussemaker H.J."/>
            <person name="van Batenburg M.F."/>
            <person name="Howells S.L."/>
            <person name="Scherer S.E."/>
            <person name="Sodergren E."/>
            <person name="Matthews B.B."/>
            <person name="Crosby M.A."/>
            <person name="Schroeder A.J."/>
            <person name="Ortiz-Barrientos D."/>
            <person name="Rives C.M."/>
            <person name="Metzker M.L."/>
            <person name="Muzny D.M."/>
            <person name="Scott G."/>
            <person name="Steffen D."/>
            <person name="Wheeler D.A."/>
            <person name="Worley K.C."/>
            <person name="Havlak P."/>
            <person name="Durbin K.J."/>
            <person name="Egan A."/>
            <person name="Gill R."/>
            <person name="Hume J."/>
            <person name="Morgan M.B."/>
            <person name="Miner G."/>
            <person name="Hamilton C."/>
            <person name="Huang Y."/>
            <person name="Waldron L."/>
            <person name="Verduzco D."/>
            <person name="Clerc-Blankenburg K.P."/>
            <person name="Dubchak I."/>
            <person name="Noor M.A.F."/>
            <person name="Anderson W."/>
            <person name="White K.P."/>
            <person name="Clark A.G."/>
            <person name="Schaeffer S.W."/>
            <person name="Gelbart W.M."/>
            <person name="Weinstock G.M."/>
            <person name="Gibbs R.A."/>
        </authorList>
    </citation>
    <scope>NUCLEOTIDE SEQUENCE [LARGE SCALE GENOMIC DNA]</scope>
    <source>
        <strain>MV2-25 / Tucson 14011-0121.94</strain>
    </source>
</reference>
<evidence type="ECO:0000250" key="1"/>
<evidence type="ECO:0000250" key="2">
    <source>
        <dbReference type="UniProtKB" id="Q80WB5"/>
    </source>
</evidence>
<evidence type="ECO:0000250" key="3">
    <source>
        <dbReference type="UniProtKB" id="Q96HA8"/>
    </source>
</evidence>
<evidence type="ECO:0000305" key="4"/>
<sequence>MTTDFLFPKIADCSYVSCYCEENVWKLCEQVKRTRPEELGTCYAVFVSNEGRTVPLWRQKAGRGDDQVVIWDYHVFFMHNPSPNRCLVFDLDTTLPFPTYFHKYVTETFRSDLALRPEHHRFFRVIPADTYLIEFSSDRRHMRRPDGSWIKPPPSYPPILSNTNMHCLGDFICMSAGKGPGAVYSLSEFVHNFYKSPNMVAQHNK</sequence>
<dbReference type="EC" id="3.5.1.122" evidence="2"/>
<dbReference type="EMBL" id="CM000071">
    <property type="protein sequence ID" value="EAL26657.1"/>
    <property type="molecule type" value="Genomic_DNA"/>
</dbReference>
<dbReference type="RefSeq" id="XP_001362077.1">
    <property type="nucleotide sequence ID" value="XM_001362040.3"/>
</dbReference>
<dbReference type="SMR" id="Q28WL0"/>
<dbReference type="FunCoup" id="Q28WL0">
    <property type="interactions" value="1548"/>
</dbReference>
<dbReference type="STRING" id="46245.Q28WL0"/>
<dbReference type="EnsemblMetazoa" id="FBtr0277292">
    <property type="protein sequence ID" value="FBpp0275730"/>
    <property type="gene ID" value="FBgn0080922"/>
</dbReference>
<dbReference type="GeneID" id="117183176"/>
<dbReference type="KEGG" id="dpo:117183176"/>
<dbReference type="CTD" id="36743"/>
<dbReference type="eggNOG" id="KOG3261">
    <property type="taxonomic scope" value="Eukaryota"/>
</dbReference>
<dbReference type="HOGENOM" id="CLU_091083_1_0_1"/>
<dbReference type="InParanoid" id="Q28WL0"/>
<dbReference type="OMA" id="GWGTVYS"/>
<dbReference type="PhylomeDB" id="Q28WL0"/>
<dbReference type="ChiTaRS" id="Zasp52">
    <property type="organism name" value="fly"/>
</dbReference>
<dbReference type="Proteomes" id="UP000001819">
    <property type="component" value="Chromosome 3"/>
</dbReference>
<dbReference type="Bgee" id="FBgn0080922">
    <property type="expression patterns" value="Expressed in insect adult head and 2 other cell types or tissues"/>
</dbReference>
<dbReference type="GO" id="GO:0005829">
    <property type="term" value="C:cytosol"/>
    <property type="evidence" value="ECO:0007669"/>
    <property type="project" value="TreeGrafter"/>
</dbReference>
<dbReference type="GO" id="GO:0005634">
    <property type="term" value="C:nucleus"/>
    <property type="evidence" value="ECO:0007669"/>
    <property type="project" value="TreeGrafter"/>
</dbReference>
<dbReference type="GO" id="GO:0008418">
    <property type="term" value="F:protein-N-terminal asparagine amidohydrolase activity"/>
    <property type="evidence" value="ECO:0007669"/>
    <property type="project" value="InterPro"/>
</dbReference>
<dbReference type="GO" id="GO:0070773">
    <property type="term" value="F:protein-N-terminal glutamine amidohydrolase activity"/>
    <property type="evidence" value="ECO:0007669"/>
    <property type="project" value="UniProtKB-EC"/>
</dbReference>
<dbReference type="FunFam" id="3.10.620.10:FF:000001">
    <property type="entry name" value="Blast:Protein N-terminal glutamine amidohydrolase"/>
    <property type="match status" value="1"/>
</dbReference>
<dbReference type="Gene3D" id="3.10.620.10">
    <property type="entry name" value="Protein N-terminal glutamine amidohydrolase, alpha beta roll"/>
    <property type="match status" value="1"/>
</dbReference>
<dbReference type="InterPro" id="IPR037132">
    <property type="entry name" value="N_Gln_amidohydro_ab_roll_sf"/>
</dbReference>
<dbReference type="InterPro" id="IPR039733">
    <property type="entry name" value="NTAQ1"/>
</dbReference>
<dbReference type="InterPro" id="IPR023128">
    <property type="entry name" value="Prot_N_Gln_amidohydro_ab_roll"/>
</dbReference>
<dbReference type="PANTHER" id="PTHR13035">
    <property type="entry name" value="PROTEIN N-TERMINAL GLUTAMINE AMIDOHYDROLASE"/>
    <property type="match status" value="1"/>
</dbReference>
<dbReference type="PANTHER" id="PTHR13035:SF0">
    <property type="entry name" value="PROTEIN N-TERMINAL GLUTAMINE AMIDOHYDROLASE"/>
    <property type="match status" value="1"/>
</dbReference>
<dbReference type="Pfam" id="PF09764">
    <property type="entry name" value="Nt_Gln_amidase"/>
    <property type="match status" value="1"/>
</dbReference>